<evidence type="ECO:0000255" key="1">
    <source>
        <dbReference type="HAMAP-Rule" id="MF_03010"/>
    </source>
</evidence>
<evidence type="ECO:0000255" key="2">
    <source>
        <dbReference type="PROSITE-ProRule" id="PRU01185"/>
    </source>
</evidence>
<dbReference type="EMBL" id="CH479181">
    <property type="protein sequence ID" value="EDW31728.1"/>
    <property type="molecule type" value="Genomic_DNA"/>
</dbReference>
<dbReference type="SMR" id="B4G9X6"/>
<dbReference type="STRING" id="7234.B4G9X6"/>
<dbReference type="EnsemblMetazoa" id="FBtr0176417">
    <property type="protein sequence ID" value="FBpp0174909"/>
    <property type="gene ID" value="FBgn0148412"/>
</dbReference>
<dbReference type="EnsemblMetazoa" id="XM_002015802.2">
    <property type="protein sequence ID" value="XP_002015838.1"/>
    <property type="gene ID" value="LOC6590358"/>
</dbReference>
<dbReference type="GeneID" id="6590358"/>
<dbReference type="KEGG" id="dpe:6590358"/>
<dbReference type="CTD" id="27335"/>
<dbReference type="eggNOG" id="KOG3252">
    <property type="taxonomic scope" value="Eukaryota"/>
</dbReference>
<dbReference type="HOGENOM" id="CLU_076723_1_0_1"/>
<dbReference type="OMA" id="WKHQGQG"/>
<dbReference type="OrthoDB" id="337745at2759"/>
<dbReference type="PhylomeDB" id="B4G9X6"/>
<dbReference type="Proteomes" id="UP000008744">
    <property type="component" value="Unassembled WGS sequence"/>
</dbReference>
<dbReference type="GO" id="GO:0016282">
    <property type="term" value="C:eukaryotic 43S preinitiation complex"/>
    <property type="evidence" value="ECO:0007669"/>
    <property type="project" value="UniProtKB-UniRule"/>
</dbReference>
<dbReference type="GO" id="GO:0033290">
    <property type="term" value="C:eukaryotic 48S preinitiation complex"/>
    <property type="evidence" value="ECO:0007669"/>
    <property type="project" value="UniProtKB-UniRule"/>
</dbReference>
<dbReference type="GO" id="GO:0005852">
    <property type="term" value="C:eukaryotic translation initiation factor 3 complex"/>
    <property type="evidence" value="ECO:0007669"/>
    <property type="project" value="UniProtKB-UniRule"/>
</dbReference>
<dbReference type="GO" id="GO:0043022">
    <property type="term" value="F:ribosome binding"/>
    <property type="evidence" value="ECO:0007669"/>
    <property type="project" value="InterPro"/>
</dbReference>
<dbReference type="GO" id="GO:0003723">
    <property type="term" value="F:RNA binding"/>
    <property type="evidence" value="ECO:0007669"/>
    <property type="project" value="UniProtKB-UniRule"/>
</dbReference>
<dbReference type="GO" id="GO:0003743">
    <property type="term" value="F:translation initiation factor activity"/>
    <property type="evidence" value="ECO:0007669"/>
    <property type="project" value="UniProtKB-UniRule"/>
</dbReference>
<dbReference type="GO" id="GO:0001732">
    <property type="term" value="P:formation of cytoplasmic translation initiation complex"/>
    <property type="evidence" value="ECO:0007669"/>
    <property type="project" value="UniProtKB-UniRule"/>
</dbReference>
<dbReference type="GO" id="GO:0006446">
    <property type="term" value="P:regulation of translational initiation"/>
    <property type="evidence" value="ECO:0007669"/>
    <property type="project" value="InterPro"/>
</dbReference>
<dbReference type="FunFam" id="1.10.10.10:FF:000212">
    <property type="entry name" value="Eukaryotic translation initiation factor 3 subunit K"/>
    <property type="match status" value="1"/>
</dbReference>
<dbReference type="FunFam" id="1.25.40.250:FF:000001">
    <property type="entry name" value="Eukaryotic translation initiation factor 3 subunit K"/>
    <property type="match status" value="1"/>
</dbReference>
<dbReference type="Gene3D" id="1.25.40.250">
    <property type="entry name" value="ARM repeat, domain 1"/>
    <property type="match status" value="1"/>
</dbReference>
<dbReference type="Gene3D" id="1.10.10.10">
    <property type="entry name" value="Winged helix-like DNA-binding domain superfamily/Winged helix DNA-binding domain"/>
    <property type="match status" value="1"/>
</dbReference>
<dbReference type="HAMAP" id="MF_03010">
    <property type="entry name" value="eIF3k"/>
    <property type="match status" value="1"/>
</dbReference>
<dbReference type="InterPro" id="IPR016024">
    <property type="entry name" value="ARM-type_fold"/>
</dbReference>
<dbReference type="InterPro" id="IPR033464">
    <property type="entry name" value="CSN8_PSD8_EIF3K"/>
</dbReference>
<dbReference type="InterPro" id="IPR009374">
    <property type="entry name" value="eIF3k"/>
</dbReference>
<dbReference type="InterPro" id="IPR000717">
    <property type="entry name" value="PCI_dom"/>
</dbReference>
<dbReference type="InterPro" id="IPR016020">
    <property type="entry name" value="Transl_init_fac_sub12_N_euk"/>
</dbReference>
<dbReference type="InterPro" id="IPR036388">
    <property type="entry name" value="WH-like_DNA-bd_sf"/>
</dbReference>
<dbReference type="InterPro" id="IPR036390">
    <property type="entry name" value="WH_DNA-bd_sf"/>
</dbReference>
<dbReference type="PANTHER" id="PTHR13022">
    <property type="entry name" value="EUKARYOTIC TRANSLATION INITIATION FACTOR 3 SUBUNIT 11"/>
    <property type="match status" value="1"/>
</dbReference>
<dbReference type="PANTHER" id="PTHR13022:SF0">
    <property type="entry name" value="EUKARYOTIC TRANSLATION INITIATION FACTOR 3 SUBUNIT K"/>
    <property type="match status" value="1"/>
</dbReference>
<dbReference type="Pfam" id="PF10075">
    <property type="entry name" value="CSN8_PSD8_EIF3K"/>
    <property type="match status" value="1"/>
</dbReference>
<dbReference type="SUPFAM" id="SSF48371">
    <property type="entry name" value="ARM repeat"/>
    <property type="match status" value="1"/>
</dbReference>
<dbReference type="SUPFAM" id="SSF46785">
    <property type="entry name" value="Winged helix' DNA-binding domain"/>
    <property type="match status" value="1"/>
</dbReference>
<dbReference type="PROSITE" id="PS50250">
    <property type="entry name" value="PCI"/>
    <property type="match status" value="1"/>
</dbReference>
<comment type="function">
    <text evidence="1">Component of the eukaryotic translation initiation factor 3 (eIF-3) complex, which is involved in protein synthesis of a specialized repertoire of mRNAs and, together with other initiation factors, stimulates binding of mRNA and methionyl-tRNAi to the 40S ribosome. The eIF-3 complex specifically targets and initiates translation of a subset of mRNAs involved in cell proliferation.</text>
</comment>
<comment type="subunit">
    <text evidence="1">Component of the eukaryotic translation initiation factor 3 (eIF-3) complex. The eIF-3 complex interacts with pix.</text>
</comment>
<comment type="subcellular location">
    <subcellularLocation>
        <location evidence="1">Cytoplasm</location>
    </subcellularLocation>
</comment>
<comment type="similarity">
    <text evidence="1">Belongs to the eIF-3 subunit K family.</text>
</comment>
<gene>
    <name type="ORF">GL10802</name>
</gene>
<protein>
    <recommendedName>
        <fullName evidence="1">Eukaryotic translation initiation factor 3 subunit K</fullName>
        <shortName evidence="1">eIF3k</shortName>
    </recommendedName>
    <alternativeName>
        <fullName evidence="1">eIF-3 p25</fullName>
    </alternativeName>
</protein>
<sequence>MSHLVKMENGQSQTIQEMLGCIERYNPDHLKTLEAYIQDQAKNNTYDLEANLAVLKLYQFNPHMLNFEITYTILLKSLTNLPHTDFVMAKCLLLPQQMKDENIQTIIDLADILERADFTLFWQRAEVNRTMFRHISGFHDSIRKFVSHVVSITFQTIKKDLLKELLGGIEDSTLESWIKRNGWKHQGQDLIVVAMQDDKIKTKNITEKIEFENVGALMAQCL</sequence>
<accession>B4G9X6</accession>
<name>EIF3K_DROPE</name>
<reference key="1">
    <citation type="journal article" date="2007" name="Nature">
        <title>Evolution of genes and genomes on the Drosophila phylogeny.</title>
        <authorList>
            <consortium name="Drosophila 12 genomes consortium"/>
        </authorList>
    </citation>
    <scope>NUCLEOTIDE SEQUENCE [LARGE SCALE GENOMIC DNA]</scope>
    <source>
        <strain>MSH-3 / Tucson 14011-0111.49</strain>
    </source>
</reference>
<keyword id="KW-0963">Cytoplasm</keyword>
<keyword id="KW-0396">Initiation factor</keyword>
<keyword id="KW-0648">Protein biosynthesis</keyword>
<keyword id="KW-1185">Reference proteome</keyword>
<organism>
    <name type="scientific">Drosophila persimilis</name>
    <name type="common">Fruit fly</name>
    <dbReference type="NCBI Taxonomy" id="7234"/>
    <lineage>
        <taxon>Eukaryota</taxon>
        <taxon>Metazoa</taxon>
        <taxon>Ecdysozoa</taxon>
        <taxon>Arthropoda</taxon>
        <taxon>Hexapoda</taxon>
        <taxon>Insecta</taxon>
        <taxon>Pterygota</taxon>
        <taxon>Neoptera</taxon>
        <taxon>Endopterygota</taxon>
        <taxon>Diptera</taxon>
        <taxon>Brachycera</taxon>
        <taxon>Muscomorpha</taxon>
        <taxon>Ephydroidea</taxon>
        <taxon>Drosophilidae</taxon>
        <taxon>Drosophila</taxon>
        <taxon>Sophophora</taxon>
    </lineage>
</organism>
<proteinExistence type="inferred from homology"/>
<feature type="chain" id="PRO_0000365044" description="Eukaryotic translation initiation factor 3 subunit K">
    <location>
        <begin position="1"/>
        <end position="222"/>
    </location>
</feature>
<feature type="domain" description="PCI" evidence="2">
    <location>
        <begin position="46"/>
        <end position="208"/>
    </location>
</feature>